<evidence type="ECO:0000256" key="1">
    <source>
        <dbReference type="SAM" id="MobiDB-lite"/>
    </source>
</evidence>
<evidence type="ECO:0000269" key="2">
    <source>
    </source>
</evidence>
<evidence type="ECO:0000269" key="3">
    <source>
    </source>
</evidence>
<reference key="1">
    <citation type="journal article" date="2002" name="Nature">
        <title>The genome sequence of Schizosaccharomyces pombe.</title>
        <authorList>
            <person name="Wood V."/>
            <person name="Gwilliam R."/>
            <person name="Rajandream M.A."/>
            <person name="Lyne M.H."/>
            <person name="Lyne R."/>
            <person name="Stewart A."/>
            <person name="Sgouros J.G."/>
            <person name="Peat N."/>
            <person name="Hayles J."/>
            <person name="Baker S.G."/>
            <person name="Basham D."/>
            <person name="Bowman S."/>
            <person name="Brooks K."/>
            <person name="Brown D."/>
            <person name="Brown S."/>
            <person name="Chillingworth T."/>
            <person name="Churcher C.M."/>
            <person name="Collins M."/>
            <person name="Connor R."/>
            <person name="Cronin A."/>
            <person name="Davis P."/>
            <person name="Feltwell T."/>
            <person name="Fraser A."/>
            <person name="Gentles S."/>
            <person name="Goble A."/>
            <person name="Hamlin N."/>
            <person name="Harris D.E."/>
            <person name="Hidalgo J."/>
            <person name="Hodgson G."/>
            <person name="Holroyd S."/>
            <person name="Hornsby T."/>
            <person name="Howarth S."/>
            <person name="Huckle E.J."/>
            <person name="Hunt S."/>
            <person name="Jagels K."/>
            <person name="James K.D."/>
            <person name="Jones L."/>
            <person name="Jones M."/>
            <person name="Leather S."/>
            <person name="McDonald S."/>
            <person name="McLean J."/>
            <person name="Mooney P."/>
            <person name="Moule S."/>
            <person name="Mungall K.L."/>
            <person name="Murphy L.D."/>
            <person name="Niblett D."/>
            <person name="Odell C."/>
            <person name="Oliver K."/>
            <person name="O'Neil S."/>
            <person name="Pearson D."/>
            <person name="Quail M.A."/>
            <person name="Rabbinowitsch E."/>
            <person name="Rutherford K.M."/>
            <person name="Rutter S."/>
            <person name="Saunders D."/>
            <person name="Seeger K."/>
            <person name="Sharp S."/>
            <person name="Skelton J."/>
            <person name="Simmonds M.N."/>
            <person name="Squares R."/>
            <person name="Squares S."/>
            <person name="Stevens K."/>
            <person name="Taylor K."/>
            <person name="Taylor R.G."/>
            <person name="Tivey A."/>
            <person name="Walsh S.V."/>
            <person name="Warren T."/>
            <person name="Whitehead S."/>
            <person name="Woodward J.R."/>
            <person name="Volckaert G."/>
            <person name="Aert R."/>
            <person name="Robben J."/>
            <person name="Grymonprez B."/>
            <person name="Weltjens I."/>
            <person name="Vanstreels E."/>
            <person name="Rieger M."/>
            <person name="Schaefer M."/>
            <person name="Mueller-Auer S."/>
            <person name="Gabel C."/>
            <person name="Fuchs M."/>
            <person name="Duesterhoeft A."/>
            <person name="Fritzc C."/>
            <person name="Holzer E."/>
            <person name="Moestl D."/>
            <person name="Hilbert H."/>
            <person name="Borzym K."/>
            <person name="Langer I."/>
            <person name="Beck A."/>
            <person name="Lehrach H."/>
            <person name="Reinhardt R."/>
            <person name="Pohl T.M."/>
            <person name="Eger P."/>
            <person name="Zimmermann W."/>
            <person name="Wedler H."/>
            <person name="Wambutt R."/>
            <person name="Purnelle B."/>
            <person name="Goffeau A."/>
            <person name="Cadieu E."/>
            <person name="Dreano S."/>
            <person name="Gloux S."/>
            <person name="Lelaure V."/>
            <person name="Mottier S."/>
            <person name="Galibert F."/>
            <person name="Aves S.J."/>
            <person name="Xiang Z."/>
            <person name="Hunt C."/>
            <person name="Moore K."/>
            <person name="Hurst S.M."/>
            <person name="Lucas M."/>
            <person name="Rochet M."/>
            <person name="Gaillardin C."/>
            <person name="Tallada V.A."/>
            <person name="Garzon A."/>
            <person name="Thode G."/>
            <person name="Daga R.R."/>
            <person name="Cruzado L."/>
            <person name="Jimenez J."/>
            <person name="Sanchez M."/>
            <person name="del Rey F."/>
            <person name="Benito J."/>
            <person name="Dominguez A."/>
            <person name="Revuelta J.L."/>
            <person name="Moreno S."/>
            <person name="Armstrong J."/>
            <person name="Forsburg S.L."/>
            <person name="Cerutti L."/>
            <person name="Lowe T."/>
            <person name="McCombie W.R."/>
            <person name="Paulsen I."/>
            <person name="Potashkin J."/>
            <person name="Shpakovski G.V."/>
            <person name="Ussery D."/>
            <person name="Barrell B.G."/>
            <person name="Nurse P."/>
        </authorList>
    </citation>
    <scope>NUCLEOTIDE SEQUENCE [LARGE SCALE GENOMIC DNA]</scope>
    <source>
        <strain>972 / ATCC 24843</strain>
    </source>
</reference>
<reference key="2">
    <citation type="journal article" date="2006" name="Nat. Biotechnol.">
        <title>ORFeome cloning and global analysis of protein localization in the fission yeast Schizosaccharomyces pombe.</title>
        <authorList>
            <person name="Matsuyama A."/>
            <person name="Arai R."/>
            <person name="Yashiroda Y."/>
            <person name="Shirai A."/>
            <person name="Kamata A."/>
            <person name="Sekido S."/>
            <person name="Kobayashi Y."/>
            <person name="Hashimoto A."/>
            <person name="Hamamoto M."/>
            <person name="Hiraoka Y."/>
            <person name="Horinouchi S."/>
            <person name="Yoshida M."/>
        </authorList>
    </citation>
    <scope>SUBCELLULAR LOCATION [LARGE SCALE ANALYSIS]</scope>
</reference>
<reference key="3">
    <citation type="journal article" date="2008" name="J. Proteome Res.">
        <title>Phosphoproteome analysis of fission yeast.</title>
        <authorList>
            <person name="Wilson-Grady J.T."/>
            <person name="Villen J."/>
            <person name="Gygi S.P."/>
        </authorList>
    </citation>
    <scope>PHOSPHORYLATION [LARGE SCALE ANALYSIS] AT SER-121</scope>
    <scope>IDENTIFICATION BY MASS SPECTROMETRY</scope>
</reference>
<feature type="chain" id="PRO_0000372368" description="Uncharacterized protein C1952.02">
    <location>
        <begin position="1"/>
        <end position="202"/>
    </location>
</feature>
<feature type="region of interest" description="Disordered" evidence="1">
    <location>
        <begin position="118"/>
        <end position="202"/>
    </location>
</feature>
<feature type="compositionally biased region" description="Basic residues" evidence="1">
    <location>
        <begin position="142"/>
        <end position="163"/>
    </location>
</feature>
<feature type="compositionally biased region" description="Basic residues" evidence="1">
    <location>
        <begin position="186"/>
        <end position="202"/>
    </location>
</feature>
<feature type="modified residue" description="Phosphoserine" evidence="3">
    <location>
        <position position="121"/>
    </location>
</feature>
<proteinExistence type="evidence at protein level"/>
<gene>
    <name type="ORF">SPAC1952.02</name>
</gene>
<name>YLO2_SCHPO</name>
<dbReference type="EMBL" id="CU329670">
    <property type="protein sequence ID" value="CAB52566.2"/>
    <property type="molecule type" value="Genomic_DNA"/>
</dbReference>
<dbReference type="PIR" id="T37930">
    <property type="entry name" value="T37930"/>
</dbReference>
<dbReference type="BioGRID" id="279024">
    <property type="interactions" value="180"/>
</dbReference>
<dbReference type="STRING" id="284812.Q9UUK4"/>
<dbReference type="iPTMnet" id="Q9UUK4"/>
<dbReference type="PaxDb" id="4896-SPAC1952.02.1"/>
<dbReference type="EnsemblFungi" id="SPAC1952.02.1">
    <property type="protein sequence ID" value="SPAC1952.02.1:pep"/>
    <property type="gene ID" value="SPAC1952.02"/>
</dbReference>
<dbReference type="KEGG" id="spo:2542568"/>
<dbReference type="PomBase" id="SPAC1952.02"/>
<dbReference type="VEuPathDB" id="FungiDB:SPAC1952.02"/>
<dbReference type="eggNOG" id="KOG2809">
    <property type="taxonomic scope" value="Eukaryota"/>
</dbReference>
<dbReference type="HOGENOM" id="CLU_082196_1_1_1"/>
<dbReference type="InParanoid" id="Q9UUK4"/>
<dbReference type="OMA" id="KTTHDHT"/>
<dbReference type="PRO" id="PR:Q9UUK4"/>
<dbReference type="Proteomes" id="UP000002485">
    <property type="component" value="Chromosome I"/>
</dbReference>
<dbReference type="GO" id="GO:0005730">
    <property type="term" value="C:nucleolus"/>
    <property type="evidence" value="ECO:0007005"/>
    <property type="project" value="PomBase"/>
</dbReference>
<dbReference type="GO" id="GO:0003723">
    <property type="term" value="F:RNA binding"/>
    <property type="evidence" value="ECO:0000250"/>
    <property type="project" value="PomBase"/>
</dbReference>
<dbReference type="GO" id="GO:0042254">
    <property type="term" value="P:ribosome biogenesis"/>
    <property type="evidence" value="ECO:0000250"/>
    <property type="project" value="PomBase"/>
</dbReference>
<dbReference type="InterPro" id="IPR050656">
    <property type="entry name" value="PINX1"/>
</dbReference>
<dbReference type="PANTHER" id="PTHR23149">
    <property type="entry name" value="G PATCH DOMAIN CONTAINING PROTEIN"/>
    <property type="match status" value="1"/>
</dbReference>
<dbReference type="PANTHER" id="PTHR23149:SF31">
    <property type="entry name" value="PROTEIN PXR1"/>
    <property type="match status" value="1"/>
</dbReference>
<sequence>MFSSKRYLNSFGWEEGNALKEGGLTKPILTSRKYNTHGLGAKHDIADQWWDNVFSAQLQSIQVNTDNGKVAVQSNGVSTKLRMAKYHSKYSALSSVFRYAGRLCGTFEEDLVDKSLDSSVSPVSSKKVKVRKTSGKESSKREKSKKKKEKKEKKDKLKKKSKRLKLDDSHTQKRKRKVRDKESKKSSKSGLKKVSGTKKVKA</sequence>
<organism>
    <name type="scientific">Schizosaccharomyces pombe (strain 972 / ATCC 24843)</name>
    <name type="common">Fission yeast</name>
    <dbReference type="NCBI Taxonomy" id="284812"/>
    <lineage>
        <taxon>Eukaryota</taxon>
        <taxon>Fungi</taxon>
        <taxon>Dikarya</taxon>
        <taxon>Ascomycota</taxon>
        <taxon>Taphrinomycotina</taxon>
        <taxon>Schizosaccharomycetes</taxon>
        <taxon>Schizosaccharomycetales</taxon>
        <taxon>Schizosaccharomycetaceae</taxon>
        <taxon>Schizosaccharomyces</taxon>
    </lineage>
</organism>
<protein>
    <recommendedName>
        <fullName>Uncharacterized protein C1952.02</fullName>
    </recommendedName>
</protein>
<accession>Q9UUK4</accession>
<keyword id="KW-0539">Nucleus</keyword>
<keyword id="KW-0597">Phosphoprotein</keyword>
<keyword id="KW-1185">Reference proteome</keyword>
<comment type="subcellular location">
    <subcellularLocation>
        <location evidence="2">Nucleus</location>
        <location evidence="2">Nucleolus</location>
    </subcellularLocation>
</comment>